<gene>
    <name type="primary">yozM</name>
    <name type="ordered locus">BSU18960</name>
</gene>
<sequence length="111" mass="12985">MKKRLIGFLVLVPALIMWGITLIESNKKTPVEVLESAWDEFGLFSFEIGITDPAITIGMDQTKSEAKLREYLKDNLSREAKEKYKIYIFKDDTDKLEKEHQEYLKENNLNK</sequence>
<dbReference type="EMBL" id="AL009126">
    <property type="protein sequence ID" value="CAB13788.1"/>
    <property type="molecule type" value="Genomic_DNA"/>
</dbReference>
<dbReference type="PIR" id="A69932">
    <property type="entry name" value="A69932"/>
</dbReference>
<dbReference type="RefSeq" id="NP_389777.1">
    <property type="nucleotide sequence ID" value="NC_000964.3"/>
</dbReference>
<dbReference type="RefSeq" id="WP_009967409.1">
    <property type="nucleotide sequence ID" value="NZ_OZ025638.1"/>
</dbReference>
<dbReference type="FunCoup" id="O31843">
    <property type="interactions" value="89"/>
</dbReference>
<dbReference type="STRING" id="224308.BSU18960"/>
<dbReference type="PaxDb" id="224308-BSU18960"/>
<dbReference type="EnsemblBacteria" id="CAB13788">
    <property type="protein sequence ID" value="CAB13788"/>
    <property type="gene ID" value="BSU_18960"/>
</dbReference>
<dbReference type="GeneID" id="939622"/>
<dbReference type="KEGG" id="bsu:BSU18960"/>
<dbReference type="PATRIC" id="fig|224308.179.peg.2073"/>
<dbReference type="eggNOG" id="ENOG502ZP4F">
    <property type="taxonomic scope" value="Bacteria"/>
</dbReference>
<dbReference type="InParanoid" id="O31843"/>
<dbReference type="OrthoDB" id="2888227at2"/>
<dbReference type="BioCyc" id="BSUB:BSU18960-MONOMER"/>
<dbReference type="Proteomes" id="UP000001570">
    <property type="component" value="Chromosome"/>
</dbReference>
<organism>
    <name type="scientific">Bacillus subtilis (strain 168)</name>
    <dbReference type="NCBI Taxonomy" id="224308"/>
    <lineage>
        <taxon>Bacteria</taxon>
        <taxon>Bacillati</taxon>
        <taxon>Bacillota</taxon>
        <taxon>Bacilli</taxon>
        <taxon>Bacillales</taxon>
        <taxon>Bacillaceae</taxon>
        <taxon>Bacillus</taxon>
    </lineage>
</organism>
<feature type="signal peptide" evidence="1">
    <location>
        <begin position="1"/>
        <end position="24"/>
    </location>
</feature>
<feature type="chain" id="PRO_0000359954" description="Prophage-derived-like uncharacterized protein YozM">
    <location>
        <begin position="25"/>
        <end position="111"/>
    </location>
</feature>
<reference key="1">
    <citation type="journal article" date="1997" name="Nature">
        <title>The complete genome sequence of the Gram-positive bacterium Bacillus subtilis.</title>
        <authorList>
            <person name="Kunst F."/>
            <person name="Ogasawara N."/>
            <person name="Moszer I."/>
            <person name="Albertini A.M."/>
            <person name="Alloni G."/>
            <person name="Azevedo V."/>
            <person name="Bertero M.G."/>
            <person name="Bessieres P."/>
            <person name="Bolotin A."/>
            <person name="Borchert S."/>
            <person name="Borriss R."/>
            <person name="Boursier L."/>
            <person name="Brans A."/>
            <person name="Braun M."/>
            <person name="Brignell S.C."/>
            <person name="Bron S."/>
            <person name="Brouillet S."/>
            <person name="Bruschi C.V."/>
            <person name="Caldwell B."/>
            <person name="Capuano V."/>
            <person name="Carter N.M."/>
            <person name="Choi S.-K."/>
            <person name="Codani J.-J."/>
            <person name="Connerton I.F."/>
            <person name="Cummings N.J."/>
            <person name="Daniel R.A."/>
            <person name="Denizot F."/>
            <person name="Devine K.M."/>
            <person name="Duesterhoeft A."/>
            <person name="Ehrlich S.D."/>
            <person name="Emmerson P.T."/>
            <person name="Entian K.-D."/>
            <person name="Errington J."/>
            <person name="Fabret C."/>
            <person name="Ferrari E."/>
            <person name="Foulger D."/>
            <person name="Fritz C."/>
            <person name="Fujita M."/>
            <person name="Fujita Y."/>
            <person name="Fuma S."/>
            <person name="Galizzi A."/>
            <person name="Galleron N."/>
            <person name="Ghim S.-Y."/>
            <person name="Glaser P."/>
            <person name="Goffeau A."/>
            <person name="Golightly E.J."/>
            <person name="Grandi G."/>
            <person name="Guiseppi G."/>
            <person name="Guy B.J."/>
            <person name="Haga K."/>
            <person name="Haiech J."/>
            <person name="Harwood C.R."/>
            <person name="Henaut A."/>
            <person name="Hilbert H."/>
            <person name="Holsappel S."/>
            <person name="Hosono S."/>
            <person name="Hullo M.-F."/>
            <person name="Itaya M."/>
            <person name="Jones L.-M."/>
            <person name="Joris B."/>
            <person name="Karamata D."/>
            <person name="Kasahara Y."/>
            <person name="Klaerr-Blanchard M."/>
            <person name="Klein C."/>
            <person name="Kobayashi Y."/>
            <person name="Koetter P."/>
            <person name="Koningstein G."/>
            <person name="Krogh S."/>
            <person name="Kumano M."/>
            <person name="Kurita K."/>
            <person name="Lapidus A."/>
            <person name="Lardinois S."/>
            <person name="Lauber J."/>
            <person name="Lazarevic V."/>
            <person name="Lee S.-M."/>
            <person name="Levine A."/>
            <person name="Liu H."/>
            <person name="Masuda S."/>
            <person name="Mauel C."/>
            <person name="Medigue C."/>
            <person name="Medina N."/>
            <person name="Mellado R.P."/>
            <person name="Mizuno M."/>
            <person name="Moestl D."/>
            <person name="Nakai S."/>
            <person name="Noback M."/>
            <person name="Noone D."/>
            <person name="O'Reilly M."/>
            <person name="Ogawa K."/>
            <person name="Ogiwara A."/>
            <person name="Oudega B."/>
            <person name="Park S.-H."/>
            <person name="Parro V."/>
            <person name="Pohl T.M."/>
            <person name="Portetelle D."/>
            <person name="Porwollik S."/>
            <person name="Prescott A.M."/>
            <person name="Presecan E."/>
            <person name="Pujic P."/>
            <person name="Purnelle B."/>
            <person name="Rapoport G."/>
            <person name="Rey M."/>
            <person name="Reynolds S."/>
            <person name="Rieger M."/>
            <person name="Rivolta C."/>
            <person name="Rocha E."/>
            <person name="Roche B."/>
            <person name="Rose M."/>
            <person name="Sadaie Y."/>
            <person name="Sato T."/>
            <person name="Scanlan E."/>
            <person name="Schleich S."/>
            <person name="Schroeter R."/>
            <person name="Scoffone F."/>
            <person name="Sekiguchi J."/>
            <person name="Sekowska A."/>
            <person name="Seror S.J."/>
            <person name="Serror P."/>
            <person name="Shin B.-S."/>
            <person name="Soldo B."/>
            <person name="Sorokin A."/>
            <person name="Tacconi E."/>
            <person name="Takagi T."/>
            <person name="Takahashi H."/>
            <person name="Takemaru K."/>
            <person name="Takeuchi M."/>
            <person name="Tamakoshi A."/>
            <person name="Tanaka T."/>
            <person name="Terpstra P."/>
            <person name="Tognoni A."/>
            <person name="Tosato V."/>
            <person name="Uchiyama S."/>
            <person name="Vandenbol M."/>
            <person name="Vannier F."/>
            <person name="Vassarotti A."/>
            <person name="Viari A."/>
            <person name="Wambutt R."/>
            <person name="Wedler E."/>
            <person name="Wedler H."/>
            <person name="Weitzenegger T."/>
            <person name="Winters P."/>
            <person name="Wipat A."/>
            <person name="Yamamoto H."/>
            <person name="Yamane K."/>
            <person name="Yasumoto K."/>
            <person name="Yata K."/>
            <person name="Yoshida K."/>
            <person name="Yoshikawa H.-F."/>
            <person name="Zumstein E."/>
            <person name="Yoshikawa H."/>
            <person name="Danchin A."/>
        </authorList>
    </citation>
    <scope>NUCLEOTIDE SEQUENCE [LARGE SCALE GENOMIC DNA]</scope>
    <source>
        <strain>168</strain>
    </source>
</reference>
<proteinExistence type="inferred from homology"/>
<keyword id="KW-1185">Reference proteome</keyword>
<keyword id="KW-0732">Signal</keyword>
<name>YOZM_BACSU</name>
<evidence type="ECO:0000255" key="1"/>
<protein>
    <recommendedName>
        <fullName>Prophage-derived-like uncharacterized protein YozM</fullName>
    </recommendedName>
</protein>
<accession>O31843</accession>